<accession>Q8BRF7</accession>
<accession>Q8BRZ2</accession>
<accession>Q8K179</accession>
<accession>Q9CXR8</accession>
<sequence>MVGSKMAATASIRERQTVALKRMLNFNVPHVKNSTGEPVWKVLIYDRFGQDIISPLLSVKELRDMGITLHLLLHSDRDPIPDVPAVYFVMPTEENIDRLCQDLRNQLYESYYLNFISAISRSKLEDIANAALAASAVTQVAKVFDQYLNFITLEDDMFVLCNQNKELVSYRAINRPDITDTEMETVMDTIVDSLFCFFVTLGAVPIIRCSRGTAAEMVAVKLDKKLRENLRDARNSLFTGDPLGTGQFSFQRPLLVLVDRNIDLATPLHHTWTYQALVHDVLDFHLNRVNLEESTGVENSPAGARPKRKNKKSYDLTPVDKFWQKHKGSPFPEVAESVQQELESYRAQEDEVKRLKSIMGLEGEDEGAISMLSDNTAKLTSAVSSLPELLEKKRLIDLHTNVATAVLEHIKARKLDVYFEYEEKIMSKTTLDKSLLDVISDPDAGTPEDKMRLFLIYYISAQQAPSEVDLEQYKKALTDAGCNLSPLQYIKQWKAFAKMASTPASYGNTTTKPMGLLSRVMNTGSQFVMEGVKNLVLKQQNLPVTRILDNLMEMKSNPETDDYRYFDPKMLRSNDSSVPRNKSPFQEAIVFVVGGGNYIEYQNLVDYIKAKQGKHILYGCSEIFNATQFIKQLSQLGQK</sequence>
<name>SCFD1_MOUSE</name>
<gene>
    <name type="primary">Scfd1</name>
    <name type="synonym">Stxbp1l2</name>
</gene>
<evidence type="ECO:0000250" key="1"/>
<evidence type="ECO:0000250" key="2">
    <source>
        <dbReference type="UniProtKB" id="Q62991"/>
    </source>
</evidence>
<evidence type="ECO:0000250" key="3">
    <source>
        <dbReference type="UniProtKB" id="Q8WVM8"/>
    </source>
</evidence>
<evidence type="ECO:0000303" key="4">
    <source>
    </source>
</evidence>
<evidence type="ECO:0000303" key="5">
    <source>
    </source>
</evidence>
<evidence type="ECO:0000305" key="6"/>
<evidence type="ECO:0007744" key="7">
    <source>
    </source>
</evidence>
<evidence type="ECO:0007744" key="8">
    <source>
    </source>
</evidence>
<organism>
    <name type="scientific">Mus musculus</name>
    <name type="common">Mouse</name>
    <dbReference type="NCBI Taxonomy" id="10090"/>
    <lineage>
        <taxon>Eukaryota</taxon>
        <taxon>Metazoa</taxon>
        <taxon>Chordata</taxon>
        <taxon>Craniata</taxon>
        <taxon>Vertebrata</taxon>
        <taxon>Euteleostomi</taxon>
        <taxon>Mammalia</taxon>
        <taxon>Eutheria</taxon>
        <taxon>Euarchontoglires</taxon>
        <taxon>Glires</taxon>
        <taxon>Rodentia</taxon>
        <taxon>Myomorpha</taxon>
        <taxon>Muroidea</taxon>
        <taxon>Muridae</taxon>
        <taxon>Murinae</taxon>
        <taxon>Mus</taxon>
        <taxon>Mus</taxon>
    </lineage>
</organism>
<reference key="1">
    <citation type="journal article" date="2005" name="Science">
        <title>The transcriptional landscape of the mammalian genome.</title>
        <authorList>
            <person name="Carninci P."/>
            <person name="Kasukawa T."/>
            <person name="Katayama S."/>
            <person name="Gough J."/>
            <person name="Frith M.C."/>
            <person name="Maeda N."/>
            <person name="Oyama R."/>
            <person name="Ravasi T."/>
            <person name="Lenhard B."/>
            <person name="Wells C."/>
            <person name="Kodzius R."/>
            <person name="Shimokawa K."/>
            <person name="Bajic V.B."/>
            <person name="Brenner S.E."/>
            <person name="Batalov S."/>
            <person name="Forrest A.R."/>
            <person name="Zavolan M."/>
            <person name="Davis M.J."/>
            <person name="Wilming L.G."/>
            <person name="Aidinis V."/>
            <person name="Allen J.E."/>
            <person name="Ambesi-Impiombato A."/>
            <person name="Apweiler R."/>
            <person name="Aturaliya R.N."/>
            <person name="Bailey T.L."/>
            <person name="Bansal M."/>
            <person name="Baxter L."/>
            <person name="Beisel K.W."/>
            <person name="Bersano T."/>
            <person name="Bono H."/>
            <person name="Chalk A.M."/>
            <person name="Chiu K.P."/>
            <person name="Choudhary V."/>
            <person name="Christoffels A."/>
            <person name="Clutterbuck D.R."/>
            <person name="Crowe M.L."/>
            <person name="Dalla E."/>
            <person name="Dalrymple B.P."/>
            <person name="de Bono B."/>
            <person name="Della Gatta G."/>
            <person name="di Bernardo D."/>
            <person name="Down T."/>
            <person name="Engstrom P."/>
            <person name="Fagiolini M."/>
            <person name="Faulkner G."/>
            <person name="Fletcher C.F."/>
            <person name="Fukushima T."/>
            <person name="Furuno M."/>
            <person name="Futaki S."/>
            <person name="Gariboldi M."/>
            <person name="Georgii-Hemming P."/>
            <person name="Gingeras T.R."/>
            <person name="Gojobori T."/>
            <person name="Green R.E."/>
            <person name="Gustincich S."/>
            <person name="Harbers M."/>
            <person name="Hayashi Y."/>
            <person name="Hensch T.K."/>
            <person name="Hirokawa N."/>
            <person name="Hill D."/>
            <person name="Huminiecki L."/>
            <person name="Iacono M."/>
            <person name="Ikeo K."/>
            <person name="Iwama A."/>
            <person name="Ishikawa T."/>
            <person name="Jakt M."/>
            <person name="Kanapin A."/>
            <person name="Katoh M."/>
            <person name="Kawasawa Y."/>
            <person name="Kelso J."/>
            <person name="Kitamura H."/>
            <person name="Kitano H."/>
            <person name="Kollias G."/>
            <person name="Krishnan S.P."/>
            <person name="Kruger A."/>
            <person name="Kummerfeld S.K."/>
            <person name="Kurochkin I.V."/>
            <person name="Lareau L.F."/>
            <person name="Lazarevic D."/>
            <person name="Lipovich L."/>
            <person name="Liu J."/>
            <person name="Liuni S."/>
            <person name="McWilliam S."/>
            <person name="Madan Babu M."/>
            <person name="Madera M."/>
            <person name="Marchionni L."/>
            <person name="Matsuda H."/>
            <person name="Matsuzawa S."/>
            <person name="Miki H."/>
            <person name="Mignone F."/>
            <person name="Miyake S."/>
            <person name="Morris K."/>
            <person name="Mottagui-Tabar S."/>
            <person name="Mulder N."/>
            <person name="Nakano N."/>
            <person name="Nakauchi H."/>
            <person name="Ng P."/>
            <person name="Nilsson R."/>
            <person name="Nishiguchi S."/>
            <person name="Nishikawa S."/>
            <person name="Nori F."/>
            <person name="Ohara O."/>
            <person name="Okazaki Y."/>
            <person name="Orlando V."/>
            <person name="Pang K.C."/>
            <person name="Pavan W.J."/>
            <person name="Pavesi G."/>
            <person name="Pesole G."/>
            <person name="Petrovsky N."/>
            <person name="Piazza S."/>
            <person name="Reed J."/>
            <person name="Reid J.F."/>
            <person name="Ring B.Z."/>
            <person name="Ringwald M."/>
            <person name="Rost B."/>
            <person name="Ruan Y."/>
            <person name="Salzberg S.L."/>
            <person name="Sandelin A."/>
            <person name="Schneider C."/>
            <person name="Schoenbach C."/>
            <person name="Sekiguchi K."/>
            <person name="Semple C.A."/>
            <person name="Seno S."/>
            <person name="Sessa L."/>
            <person name="Sheng Y."/>
            <person name="Shibata Y."/>
            <person name="Shimada H."/>
            <person name="Shimada K."/>
            <person name="Silva D."/>
            <person name="Sinclair B."/>
            <person name="Sperling S."/>
            <person name="Stupka E."/>
            <person name="Sugiura K."/>
            <person name="Sultana R."/>
            <person name="Takenaka Y."/>
            <person name="Taki K."/>
            <person name="Tammoja K."/>
            <person name="Tan S.L."/>
            <person name="Tang S."/>
            <person name="Taylor M.S."/>
            <person name="Tegner J."/>
            <person name="Teichmann S.A."/>
            <person name="Ueda H.R."/>
            <person name="van Nimwegen E."/>
            <person name="Verardo R."/>
            <person name="Wei C.L."/>
            <person name="Yagi K."/>
            <person name="Yamanishi H."/>
            <person name="Zabarovsky E."/>
            <person name="Zhu S."/>
            <person name="Zimmer A."/>
            <person name="Hide W."/>
            <person name="Bult C."/>
            <person name="Grimmond S.M."/>
            <person name="Teasdale R.D."/>
            <person name="Liu E.T."/>
            <person name="Brusic V."/>
            <person name="Quackenbush J."/>
            <person name="Wahlestedt C."/>
            <person name="Mattick J.S."/>
            <person name="Hume D.A."/>
            <person name="Kai C."/>
            <person name="Sasaki D."/>
            <person name="Tomaru Y."/>
            <person name="Fukuda S."/>
            <person name="Kanamori-Katayama M."/>
            <person name="Suzuki M."/>
            <person name="Aoki J."/>
            <person name="Arakawa T."/>
            <person name="Iida J."/>
            <person name="Imamura K."/>
            <person name="Itoh M."/>
            <person name="Kato T."/>
            <person name="Kawaji H."/>
            <person name="Kawagashira N."/>
            <person name="Kawashima T."/>
            <person name="Kojima M."/>
            <person name="Kondo S."/>
            <person name="Konno H."/>
            <person name="Nakano K."/>
            <person name="Ninomiya N."/>
            <person name="Nishio T."/>
            <person name="Okada M."/>
            <person name="Plessy C."/>
            <person name="Shibata K."/>
            <person name="Shiraki T."/>
            <person name="Suzuki S."/>
            <person name="Tagami M."/>
            <person name="Waki K."/>
            <person name="Watahiki A."/>
            <person name="Okamura-Oho Y."/>
            <person name="Suzuki H."/>
            <person name="Kawai J."/>
            <person name="Hayashizaki Y."/>
        </authorList>
    </citation>
    <scope>NUCLEOTIDE SEQUENCE [LARGE SCALE MRNA] (ISOFORMS 1 AND 2)</scope>
    <source>
        <strain>C57BL/6J</strain>
        <tissue>Aorta</tissue>
        <tissue>Embryo</tissue>
        <tissue>Vein</tissue>
    </source>
</reference>
<reference key="2">
    <citation type="journal article" date="2004" name="Genome Res.">
        <title>The status, quality, and expansion of the NIH full-length cDNA project: the Mammalian Gene Collection (MGC).</title>
        <authorList>
            <consortium name="The MGC Project Team"/>
        </authorList>
    </citation>
    <scope>NUCLEOTIDE SEQUENCE [LARGE SCALE MRNA] OF 5-597 (ISOFORM 3)</scope>
    <source>
        <tissue>Mammary tumor</tissue>
    </source>
</reference>
<reference key="3">
    <citation type="journal article" date="2009" name="Immunity">
        <title>The phagosomal proteome in interferon-gamma-activated macrophages.</title>
        <authorList>
            <person name="Trost M."/>
            <person name="English L."/>
            <person name="Lemieux S."/>
            <person name="Courcelles M."/>
            <person name="Desjardins M."/>
            <person name="Thibault P."/>
        </authorList>
    </citation>
    <scope>PHOSPHORYLATION [LARGE SCALE ANALYSIS] AT SER-300</scope>
    <scope>IDENTIFICATION BY MASS SPECTROMETRY [LARGE SCALE ANALYSIS]</scope>
</reference>
<reference key="4">
    <citation type="journal article" date="2010" name="Cell">
        <title>A tissue-specific atlas of mouse protein phosphorylation and expression.</title>
        <authorList>
            <person name="Huttlin E.L."/>
            <person name="Jedrychowski M.P."/>
            <person name="Elias J.E."/>
            <person name="Goswami T."/>
            <person name="Rad R."/>
            <person name="Beausoleil S.A."/>
            <person name="Villen J."/>
            <person name="Haas W."/>
            <person name="Sowa M.E."/>
            <person name="Gygi S.P."/>
        </authorList>
    </citation>
    <scope>PHOSPHORYLATION [LARGE SCALE ANALYSIS] AT SER-300</scope>
    <scope>IDENTIFICATION BY MASS SPECTROMETRY [LARGE SCALE ANALYSIS]</scope>
    <source>
        <tissue>Brain</tissue>
        <tissue>Brown adipose tissue</tissue>
        <tissue>Heart</tissue>
        <tissue>Kidney</tissue>
        <tissue>Liver</tissue>
        <tissue>Lung</tissue>
        <tissue>Pancreas</tissue>
        <tissue>Spleen</tissue>
        <tissue>Testis</tissue>
    </source>
</reference>
<dbReference type="EMBL" id="AK014070">
    <property type="protein sequence ID" value="BAB29141.1"/>
    <property type="molecule type" value="mRNA"/>
</dbReference>
<dbReference type="EMBL" id="AK041028">
    <property type="protein sequence ID" value="BAC30788.1"/>
    <property type="molecule type" value="mRNA"/>
</dbReference>
<dbReference type="EMBL" id="AK044943">
    <property type="protein sequence ID" value="BAC32152.1"/>
    <property type="molecule type" value="mRNA"/>
</dbReference>
<dbReference type="EMBL" id="BC027793">
    <property type="protein sequence ID" value="AAH27793.1"/>
    <property type="status" value="ALT_INIT"/>
    <property type="molecule type" value="mRNA"/>
</dbReference>
<dbReference type="CCDS" id="CCDS36439.1">
    <molecule id="Q8BRF7-1"/>
</dbReference>
<dbReference type="CCDS" id="CCDS88336.1">
    <molecule id="Q8BRF7-2"/>
</dbReference>
<dbReference type="RefSeq" id="NP_001293107.1">
    <molecule id="Q8BRF7-2"/>
    <property type="nucleotide sequence ID" value="NM_001306178.1"/>
</dbReference>
<dbReference type="RefSeq" id="NP_084101.1">
    <molecule id="Q8BRF7-1"/>
    <property type="nucleotide sequence ID" value="NM_029825.3"/>
</dbReference>
<dbReference type="SMR" id="Q8BRF7"/>
<dbReference type="BioGRID" id="218443">
    <property type="interactions" value="11"/>
</dbReference>
<dbReference type="FunCoup" id="Q8BRF7">
    <property type="interactions" value="4201"/>
</dbReference>
<dbReference type="STRING" id="10090.ENSMUSP00000021335"/>
<dbReference type="GlyGen" id="Q8BRF7">
    <property type="glycosylation" value="1 site, 1 N-linked glycan (1 site)"/>
</dbReference>
<dbReference type="iPTMnet" id="Q8BRF7"/>
<dbReference type="PhosphoSitePlus" id="Q8BRF7"/>
<dbReference type="SwissPalm" id="Q8BRF7"/>
<dbReference type="jPOST" id="Q8BRF7"/>
<dbReference type="PaxDb" id="10090-ENSMUSP00000021335"/>
<dbReference type="PeptideAtlas" id="Q8BRF7"/>
<dbReference type="ProteomicsDB" id="256741">
    <molecule id="Q8BRF7-1"/>
</dbReference>
<dbReference type="ProteomicsDB" id="256742">
    <molecule id="Q8BRF7-2"/>
</dbReference>
<dbReference type="ProteomicsDB" id="256743">
    <molecule id="Q8BRF7-3"/>
</dbReference>
<dbReference type="Pumba" id="Q8BRF7"/>
<dbReference type="Antibodypedia" id="112">
    <property type="antibodies" value="368 antibodies from 27 providers"/>
</dbReference>
<dbReference type="DNASU" id="76983"/>
<dbReference type="Ensembl" id="ENSMUST00000021335.7">
    <molecule id="Q8BRF7-1"/>
    <property type="protein sequence ID" value="ENSMUSP00000021335.6"/>
    <property type="gene ID" value="ENSMUSG00000020952.11"/>
</dbReference>
<dbReference type="Ensembl" id="ENSMUST00000219434.2">
    <molecule id="Q8BRF7-2"/>
    <property type="protein sequence ID" value="ENSMUSP00000151347.2"/>
    <property type="gene ID" value="ENSMUSG00000020952.11"/>
</dbReference>
<dbReference type="GeneID" id="76983"/>
<dbReference type="KEGG" id="mmu:76983"/>
<dbReference type="UCSC" id="uc007nmo.1">
    <molecule id="Q8BRF7-2"/>
    <property type="organism name" value="mouse"/>
</dbReference>
<dbReference type="UCSC" id="uc007nmq.1">
    <molecule id="Q8BRF7-1"/>
    <property type="organism name" value="mouse"/>
</dbReference>
<dbReference type="AGR" id="MGI:1924233"/>
<dbReference type="CTD" id="23256"/>
<dbReference type="MGI" id="MGI:1924233">
    <property type="gene designation" value="Scfd1"/>
</dbReference>
<dbReference type="VEuPathDB" id="HostDB:ENSMUSG00000020952"/>
<dbReference type="eggNOG" id="KOG1301">
    <property type="taxonomic scope" value="Eukaryota"/>
</dbReference>
<dbReference type="GeneTree" id="ENSGT00550000074845"/>
<dbReference type="HOGENOM" id="CLU_016216_3_1_1"/>
<dbReference type="InParanoid" id="Q8BRF7"/>
<dbReference type="OMA" id="VNDLRAW"/>
<dbReference type="OrthoDB" id="10251230at2759"/>
<dbReference type="PhylomeDB" id="Q8BRF7"/>
<dbReference type="TreeFam" id="TF105740"/>
<dbReference type="Reactome" id="R-MMU-204005">
    <property type="pathway name" value="COPII-mediated vesicle transport"/>
</dbReference>
<dbReference type="Reactome" id="R-MMU-8980692">
    <property type="pathway name" value="RHOA GTPase cycle"/>
</dbReference>
<dbReference type="BioGRID-ORCS" id="76983">
    <property type="hits" value="20 hits in 76 CRISPR screens"/>
</dbReference>
<dbReference type="CD-CODE" id="CE726F99">
    <property type="entry name" value="Postsynaptic density"/>
</dbReference>
<dbReference type="PRO" id="PR:Q8BRF7"/>
<dbReference type="Proteomes" id="UP000000589">
    <property type="component" value="Chromosome 12"/>
</dbReference>
<dbReference type="RNAct" id="Q8BRF7">
    <property type="molecule type" value="protein"/>
</dbReference>
<dbReference type="Bgee" id="ENSMUSG00000020952">
    <property type="expression patterns" value="Expressed in seminal vesicle and 257 other cell types or tissues"/>
</dbReference>
<dbReference type="ExpressionAtlas" id="Q8BRF7">
    <property type="expression patterns" value="baseline and differential"/>
</dbReference>
<dbReference type="GO" id="GO:0005801">
    <property type="term" value="C:cis-Golgi network"/>
    <property type="evidence" value="ECO:0007669"/>
    <property type="project" value="Ensembl"/>
</dbReference>
<dbReference type="GO" id="GO:0005789">
    <property type="term" value="C:endoplasmic reticulum membrane"/>
    <property type="evidence" value="ECO:0007669"/>
    <property type="project" value="UniProtKB-SubCell"/>
</dbReference>
<dbReference type="GO" id="GO:0032580">
    <property type="term" value="C:Golgi cisterna membrane"/>
    <property type="evidence" value="ECO:0007669"/>
    <property type="project" value="UniProtKB-SubCell"/>
</dbReference>
<dbReference type="GO" id="GO:1902902">
    <property type="term" value="P:negative regulation of autophagosome assembly"/>
    <property type="evidence" value="ECO:0007669"/>
    <property type="project" value="Ensembl"/>
</dbReference>
<dbReference type="GO" id="GO:0015031">
    <property type="term" value="P:protein transport"/>
    <property type="evidence" value="ECO:0007669"/>
    <property type="project" value="UniProtKB-KW"/>
</dbReference>
<dbReference type="GO" id="GO:0051223">
    <property type="term" value="P:regulation of protein transport"/>
    <property type="evidence" value="ECO:0007669"/>
    <property type="project" value="Ensembl"/>
</dbReference>
<dbReference type="GO" id="GO:0009636">
    <property type="term" value="P:response to toxic substance"/>
    <property type="evidence" value="ECO:0007669"/>
    <property type="project" value="Ensembl"/>
</dbReference>
<dbReference type="GO" id="GO:0016192">
    <property type="term" value="P:vesicle-mediated transport"/>
    <property type="evidence" value="ECO:0007669"/>
    <property type="project" value="UniProtKB-KW"/>
</dbReference>
<dbReference type="FunFam" id="1.25.40.60:FF:000002">
    <property type="entry name" value="Sec1 family domain containing 1"/>
    <property type="match status" value="1"/>
</dbReference>
<dbReference type="FunFam" id="3.40.50.2060:FF:000002">
    <property type="entry name" value="sec1 family domain-containing protein 1"/>
    <property type="match status" value="1"/>
</dbReference>
<dbReference type="Gene3D" id="1.25.40.60">
    <property type="match status" value="1"/>
</dbReference>
<dbReference type="Gene3D" id="3.40.50.1910">
    <property type="match status" value="1"/>
</dbReference>
<dbReference type="Gene3D" id="3.40.50.2060">
    <property type="match status" value="1"/>
</dbReference>
<dbReference type="Gene3D" id="3.90.830.10">
    <property type="entry name" value="Syntaxin Binding Protein 1, Chain A, domain 2"/>
    <property type="match status" value="1"/>
</dbReference>
<dbReference type="InterPro" id="IPR043154">
    <property type="entry name" value="Sec-1-like_dom1"/>
</dbReference>
<dbReference type="InterPro" id="IPR043127">
    <property type="entry name" value="Sec-1-like_dom3a"/>
</dbReference>
<dbReference type="InterPro" id="IPR001619">
    <property type="entry name" value="Sec1-like"/>
</dbReference>
<dbReference type="InterPro" id="IPR027482">
    <property type="entry name" value="Sec1-like_dom2"/>
</dbReference>
<dbReference type="InterPro" id="IPR036045">
    <property type="entry name" value="Sec1-like_sf"/>
</dbReference>
<dbReference type="PANTHER" id="PTHR11679">
    <property type="entry name" value="VESICLE PROTEIN SORTING-ASSOCIATED"/>
    <property type="match status" value="1"/>
</dbReference>
<dbReference type="Pfam" id="PF00995">
    <property type="entry name" value="Sec1"/>
    <property type="match status" value="1"/>
</dbReference>
<dbReference type="PIRSF" id="PIRSF005715">
    <property type="entry name" value="VPS45_Sec1"/>
    <property type="match status" value="1"/>
</dbReference>
<dbReference type="SUPFAM" id="SSF56815">
    <property type="entry name" value="Sec1/munc18-like (SM) proteins"/>
    <property type="match status" value="1"/>
</dbReference>
<feature type="chain" id="PRO_0000206288" description="Sec1 family domain-containing protein 1">
    <location>
        <begin position="1"/>
        <end position="639"/>
    </location>
</feature>
<feature type="modified residue" description="Phosphoserine" evidence="2">
    <location>
        <position position="34"/>
    </location>
</feature>
<feature type="modified residue" description="Phosphoserine" evidence="7 8">
    <location>
        <position position="300"/>
    </location>
</feature>
<feature type="modified residue" description="Phosphoserine" evidence="3">
    <location>
        <position position="525"/>
    </location>
</feature>
<feature type="splice variant" id="VSP_011310" description="In isoform 2." evidence="5">
    <original>SLPELL</original>
    <variation>ALMSVH</variation>
    <location>
        <begin position="385"/>
        <end position="390"/>
    </location>
</feature>
<feature type="splice variant" id="VSP_011311" description="In isoform 2." evidence="5">
    <location>
        <begin position="391"/>
        <end position="639"/>
    </location>
</feature>
<feature type="splice variant" id="VSP_011312" description="In isoform 3." evidence="4">
    <original>VPRNKSPFQEAIVFVVGGGN</original>
    <variation>FLYKTEEPPASQEGGPGIPS</variation>
    <location>
        <begin position="578"/>
        <end position="597"/>
    </location>
</feature>
<feature type="splice variant" id="VSP_011313" description="In isoform 3." evidence="4">
    <location>
        <begin position="598"/>
        <end position="639"/>
    </location>
</feature>
<feature type="sequence conflict" description="In Ref. 1; BAB29141." evidence="6" ref="1">
    <original>G</original>
    <variation>E</variation>
    <location>
        <position position="328"/>
    </location>
</feature>
<keyword id="KW-0025">Alternative splicing</keyword>
<keyword id="KW-0963">Cytoplasm</keyword>
<keyword id="KW-0256">Endoplasmic reticulum</keyword>
<keyword id="KW-0931">ER-Golgi transport</keyword>
<keyword id="KW-0333">Golgi apparatus</keyword>
<keyword id="KW-0472">Membrane</keyword>
<keyword id="KW-0597">Phosphoprotein</keyword>
<keyword id="KW-0653">Protein transport</keyword>
<keyword id="KW-1185">Reference proteome</keyword>
<keyword id="KW-0813">Transport</keyword>
<protein>
    <recommendedName>
        <fullName>Sec1 family domain-containing protein 1</fullName>
    </recommendedName>
    <alternativeName>
        <fullName>Syntaxin-binding protein 1-like 2</fullName>
    </alternativeName>
</protein>
<proteinExistence type="evidence at protein level"/>
<comment type="function">
    <text evidence="1">Plays a role in SNARE-pin assembly and Golgi-to-ER retrograde transport via its interaction with COG4. Involved in vesicular transport between the endoplasmic reticulum and the Golgi (By similarity).</text>
</comment>
<comment type="subunit">
    <text evidence="1">Interacts with STX17. Interacts with STX5A. Interacts with the COG complex via COG4 (By similarity).</text>
</comment>
<comment type="subcellular location">
    <subcellularLocation>
        <location evidence="1">Cytoplasm</location>
    </subcellularLocation>
    <subcellularLocation>
        <location evidence="1">Endoplasmic reticulum membrane</location>
        <topology evidence="1">Peripheral membrane protein</topology>
    </subcellularLocation>
    <subcellularLocation>
        <location evidence="1">Golgi apparatus</location>
        <location evidence="1">Golgi stack membrane</location>
        <topology evidence="1">Peripheral membrane protein</topology>
    </subcellularLocation>
</comment>
<comment type="alternative products">
    <event type="alternative splicing"/>
    <isoform>
        <id>Q8BRF7-1</id>
        <name>1</name>
        <sequence type="displayed"/>
    </isoform>
    <isoform>
        <id>Q8BRF7-2</id>
        <name>2</name>
        <sequence type="described" ref="VSP_011310 VSP_011311"/>
    </isoform>
    <isoform>
        <id>Q8BRF7-3</id>
        <name>3</name>
        <sequence type="described" ref="VSP_011312 VSP_011313"/>
    </isoform>
</comment>
<comment type="similarity">
    <text evidence="6">Belongs to the STXBP/unc-18/SEC1 family.</text>
</comment>
<comment type="sequence caution" evidence="6">
    <conflict type="erroneous initiation">
        <sequence resource="EMBL-CDS" id="AAH27793"/>
    </conflict>
</comment>